<feature type="chain" id="PRO_0000362825" description="NAD(P)H-quinone oxidoreductase subunit 3, chloroplastic">
    <location>
        <begin position="1"/>
        <end position="120"/>
    </location>
</feature>
<feature type="transmembrane region" description="Helical" evidence="1">
    <location>
        <begin position="7"/>
        <end position="27"/>
    </location>
</feature>
<feature type="transmembrane region" description="Helical" evidence="1">
    <location>
        <begin position="64"/>
        <end position="84"/>
    </location>
</feature>
<feature type="transmembrane region" description="Helical" evidence="1">
    <location>
        <begin position="88"/>
        <end position="108"/>
    </location>
</feature>
<reference key="1">
    <citation type="journal article" date="2008" name="BMC Plant Biol.">
        <title>Complete nucleotide sequence of the Cryptomeria japonica D. Don. chloroplast genome and comparative chloroplast genomics: diversified genomic structure of coniferous species.</title>
        <authorList>
            <person name="Hirao T."/>
            <person name="Watanabe A."/>
            <person name="Kurita M."/>
            <person name="Kondo T."/>
            <person name="Takata K."/>
        </authorList>
    </citation>
    <scope>NUCLEOTIDE SEQUENCE [LARGE SCALE GENOMIC DNA]</scope>
</reference>
<name>NU3C_CRYJA</name>
<accession>B1VKF4</accession>
<protein>
    <recommendedName>
        <fullName evidence="1">NAD(P)H-quinone oxidoreductase subunit 3, chloroplastic</fullName>
        <ecNumber evidence="1">7.1.1.-</ecNumber>
    </recommendedName>
    <alternativeName>
        <fullName evidence="1">NAD(P)H dehydrogenase subunit 3</fullName>
    </alternativeName>
    <alternativeName>
        <fullName evidence="1">NADH-plastoquinone oxidoreductase subunit 3</fullName>
    </alternativeName>
</protein>
<proteinExistence type="inferred from homology"/>
<keyword id="KW-0150">Chloroplast</keyword>
<keyword id="KW-0472">Membrane</keyword>
<keyword id="KW-0520">NAD</keyword>
<keyword id="KW-0521">NADP</keyword>
<keyword id="KW-0934">Plastid</keyword>
<keyword id="KW-0618">Plastoquinone</keyword>
<keyword id="KW-0874">Quinone</keyword>
<keyword id="KW-0793">Thylakoid</keyword>
<keyword id="KW-1278">Translocase</keyword>
<keyword id="KW-0812">Transmembrane</keyword>
<keyword id="KW-1133">Transmembrane helix</keyword>
<keyword id="KW-0813">Transport</keyword>
<comment type="function">
    <text evidence="1">NDH shuttles electrons from NAD(P)H:plastoquinone, via FMN and iron-sulfur (Fe-S) centers, to quinones in the photosynthetic chain and possibly in a chloroplast respiratory chain. The immediate electron acceptor for the enzyme in this species is believed to be plastoquinone. Couples the redox reaction to proton translocation, and thus conserves the redox energy in a proton gradient.</text>
</comment>
<comment type="catalytic activity">
    <reaction evidence="1">
        <text>a plastoquinone + NADH + (n+1) H(+)(in) = a plastoquinol + NAD(+) + n H(+)(out)</text>
        <dbReference type="Rhea" id="RHEA:42608"/>
        <dbReference type="Rhea" id="RHEA-COMP:9561"/>
        <dbReference type="Rhea" id="RHEA-COMP:9562"/>
        <dbReference type="ChEBI" id="CHEBI:15378"/>
        <dbReference type="ChEBI" id="CHEBI:17757"/>
        <dbReference type="ChEBI" id="CHEBI:57540"/>
        <dbReference type="ChEBI" id="CHEBI:57945"/>
        <dbReference type="ChEBI" id="CHEBI:62192"/>
    </reaction>
</comment>
<comment type="catalytic activity">
    <reaction evidence="1">
        <text>a plastoquinone + NADPH + (n+1) H(+)(in) = a plastoquinol + NADP(+) + n H(+)(out)</text>
        <dbReference type="Rhea" id="RHEA:42612"/>
        <dbReference type="Rhea" id="RHEA-COMP:9561"/>
        <dbReference type="Rhea" id="RHEA-COMP:9562"/>
        <dbReference type="ChEBI" id="CHEBI:15378"/>
        <dbReference type="ChEBI" id="CHEBI:17757"/>
        <dbReference type="ChEBI" id="CHEBI:57783"/>
        <dbReference type="ChEBI" id="CHEBI:58349"/>
        <dbReference type="ChEBI" id="CHEBI:62192"/>
    </reaction>
</comment>
<comment type="subunit">
    <text evidence="1">NDH is composed of at least 16 different subunits, 5 of which are encoded in the nucleus.</text>
</comment>
<comment type="subcellular location">
    <subcellularLocation>
        <location evidence="1">Plastid</location>
        <location evidence="1">Chloroplast thylakoid membrane</location>
        <topology evidence="1">Multi-pass membrane protein</topology>
    </subcellularLocation>
</comment>
<comment type="similarity">
    <text evidence="1">Belongs to the complex I subunit 3 family.</text>
</comment>
<geneLocation type="chloroplast"/>
<organism>
    <name type="scientific">Cryptomeria japonica</name>
    <name type="common">Japanese cedar</name>
    <name type="synonym">Cupressus japonica</name>
    <dbReference type="NCBI Taxonomy" id="3369"/>
    <lineage>
        <taxon>Eukaryota</taxon>
        <taxon>Viridiplantae</taxon>
        <taxon>Streptophyta</taxon>
        <taxon>Embryophyta</taxon>
        <taxon>Tracheophyta</taxon>
        <taxon>Spermatophyta</taxon>
        <taxon>Pinopsida</taxon>
        <taxon>Pinidae</taxon>
        <taxon>Conifers II</taxon>
        <taxon>Cupressales</taxon>
        <taxon>Cupressaceae</taxon>
        <taxon>Cryptomeria</taxon>
    </lineage>
</organism>
<sequence length="120" mass="13963">MYLFSEYDTFWIYLSISSLIPILAFSISRSLAPISKGAEKATSYESGIEPMGDTWIQFRIRYYMFALVFVVFDVETVFLYPWAMSFDILGLFTFIEAFIFVIILIVGLVYAWRKGALEWS</sequence>
<evidence type="ECO:0000255" key="1">
    <source>
        <dbReference type="HAMAP-Rule" id="MF_01394"/>
    </source>
</evidence>
<dbReference type="EC" id="7.1.1.-" evidence="1"/>
<dbReference type="EMBL" id="AP009377">
    <property type="protein sequence ID" value="BAG16665.1"/>
    <property type="molecule type" value="Genomic_DNA"/>
</dbReference>
<dbReference type="RefSeq" id="YP_001806667.1">
    <property type="nucleotide sequence ID" value="NC_010548.1"/>
</dbReference>
<dbReference type="SMR" id="B1VKF4"/>
<dbReference type="GeneID" id="6166637"/>
<dbReference type="KEGG" id="cjf:6166637"/>
<dbReference type="OrthoDB" id="1852333at2759"/>
<dbReference type="GO" id="GO:0009535">
    <property type="term" value="C:chloroplast thylakoid membrane"/>
    <property type="evidence" value="ECO:0007669"/>
    <property type="project" value="UniProtKB-SubCell"/>
</dbReference>
<dbReference type="GO" id="GO:0030964">
    <property type="term" value="C:NADH dehydrogenase complex"/>
    <property type="evidence" value="ECO:0007669"/>
    <property type="project" value="TreeGrafter"/>
</dbReference>
<dbReference type="GO" id="GO:0008137">
    <property type="term" value="F:NADH dehydrogenase (ubiquinone) activity"/>
    <property type="evidence" value="ECO:0007669"/>
    <property type="project" value="InterPro"/>
</dbReference>
<dbReference type="GO" id="GO:0048038">
    <property type="term" value="F:quinone binding"/>
    <property type="evidence" value="ECO:0007669"/>
    <property type="project" value="UniProtKB-KW"/>
</dbReference>
<dbReference type="GO" id="GO:0019684">
    <property type="term" value="P:photosynthesis, light reaction"/>
    <property type="evidence" value="ECO:0007669"/>
    <property type="project" value="UniProtKB-UniRule"/>
</dbReference>
<dbReference type="FunFam" id="1.20.58.1610:FF:000001">
    <property type="entry name" value="NAD(P)H-quinone oxidoreductase subunit 3, chloroplastic"/>
    <property type="match status" value="1"/>
</dbReference>
<dbReference type="Gene3D" id="1.20.58.1610">
    <property type="entry name" value="NADH:ubiquinone/plastoquinone oxidoreductase, chain 3"/>
    <property type="match status" value="1"/>
</dbReference>
<dbReference type="HAMAP" id="MF_01394">
    <property type="entry name" value="NDH1_NuoA"/>
    <property type="match status" value="1"/>
</dbReference>
<dbReference type="InterPro" id="IPR023043">
    <property type="entry name" value="NAD(P)H_OxRDtase_bac/plastid"/>
</dbReference>
<dbReference type="InterPro" id="IPR000440">
    <property type="entry name" value="NADH_UbQ/plastoQ_OxRdtase_su3"/>
</dbReference>
<dbReference type="InterPro" id="IPR038430">
    <property type="entry name" value="NDAH_ubi_oxred_su3_sf"/>
</dbReference>
<dbReference type="PANTHER" id="PTHR11058">
    <property type="entry name" value="NADH-UBIQUINONE OXIDOREDUCTASE CHAIN 3"/>
    <property type="match status" value="1"/>
</dbReference>
<dbReference type="PANTHER" id="PTHR11058:SF9">
    <property type="entry name" value="NADH-UBIQUINONE OXIDOREDUCTASE CHAIN 3"/>
    <property type="match status" value="1"/>
</dbReference>
<dbReference type="Pfam" id="PF00507">
    <property type="entry name" value="Oxidored_q4"/>
    <property type="match status" value="1"/>
</dbReference>
<gene>
    <name evidence="1" type="primary">ndhC</name>
</gene>